<comment type="function">
    <text evidence="1">Produces ATP from ADP in the presence of a proton gradient across the membrane. The gamma chain is believed to be important in regulating ATPase activity and the flow of protons through the CF(0) complex.</text>
</comment>
<comment type="subunit">
    <text evidence="1">F-type ATPases have 2 components, CF(1) - the catalytic core - and CF(0) - the membrane proton channel. CF(1) has five subunits: alpha(3), beta(3), gamma(1), delta(1), epsilon(1). CF(0) has three main subunits: a, b and c.</text>
</comment>
<comment type="subcellular location">
    <subcellularLocation>
        <location evidence="1">Cell inner membrane</location>
        <topology evidence="1">Peripheral membrane protein</topology>
    </subcellularLocation>
</comment>
<comment type="similarity">
    <text evidence="1">Belongs to the ATPase gamma chain family.</text>
</comment>
<proteinExistence type="inferred from homology"/>
<evidence type="ECO:0000255" key="1">
    <source>
        <dbReference type="HAMAP-Rule" id="MF_00815"/>
    </source>
</evidence>
<keyword id="KW-0066">ATP synthesis</keyword>
<keyword id="KW-0997">Cell inner membrane</keyword>
<keyword id="KW-1003">Cell membrane</keyword>
<keyword id="KW-0139">CF(1)</keyword>
<keyword id="KW-0375">Hydrogen ion transport</keyword>
<keyword id="KW-0406">Ion transport</keyword>
<keyword id="KW-0472">Membrane</keyword>
<keyword id="KW-0813">Transport</keyword>
<accession>B0UE40</accession>
<name>ATPG_METS4</name>
<gene>
    <name evidence="1" type="primary">atpG</name>
    <name type="ordered locus">M446_6636</name>
</gene>
<feature type="chain" id="PRO_1000134178" description="ATP synthase gamma chain">
    <location>
        <begin position="1"/>
        <end position="292"/>
    </location>
</feature>
<dbReference type="EMBL" id="CP000943">
    <property type="protein sequence ID" value="ACA20890.1"/>
    <property type="molecule type" value="Genomic_DNA"/>
</dbReference>
<dbReference type="RefSeq" id="WP_012336266.1">
    <property type="nucleotide sequence ID" value="NC_010511.1"/>
</dbReference>
<dbReference type="SMR" id="B0UE40"/>
<dbReference type="STRING" id="426117.M446_6636"/>
<dbReference type="KEGG" id="met:M446_6636"/>
<dbReference type="eggNOG" id="COG0224">
    <property type="taxonomic scope" value="Bacteria"/>
</dbReference>
<dbReference type="HOGENOM" id="CLU_050669_0_1_5"/>
<dbReference type="GO" id="GO:0005886">
    <property type="term" value="C:plasma membrane"/>
    <property type="evidence" value="ECO:0007669"/>
    <property type="project" value="UniProtKB-SubCell"/>
</dbReference>
<dbReference type="GO" id="GO:0045259">
    <property type="term" value="C:proton-transporting ATP synthase complex"/>
    <property type="evidence" value="ECO:0007669"/>
    <property type="project" value="UniProtKB-KW"/>
</dbReference>
<dbReference type="GO" id="GO:0005524">
    <property type="term" value="F:ATP binding"/>
    <property type="evidence" value="ECO:0007669"/>
    <property type="project" value="UniProtKB-UniRule"/>
</dbReference>
<dbReference type="GO" id="GO:0046933">
    <property type="term" value="F:proton-transporting ATP synthase activity, rotational mechanism"/>
    <property type="evidence" value="ECO:0007669"/>
    <property type="project" value="UniProtKB-UniRule"/>
</dbReference>
<dbReference type="GO" id="GO:0042777">
    <property type="term" value="P:proton motive force-driven plasma membrane ATP synthesis"/>
    <property type="evidence" value="ECO:0007669"/>
    <property type="project" value="UniProtKB-UniRule"/>
</dbReference>
<dbReference type="CDD" id="cd12151">
    <property type="entry name" value="F1-ATPase_gamma"/>
    <property type="match status" value="1"/>
</dbReference>
<dbReference type="FunFam" id="1.10.287.80:FF:000001">
    <property type="entry name" value="ATP synthase gamma chain"/>
    <property type="match status" value="1"/>
</dbReference>
<dbReference type="FunFam" id="1.10.287.80:FF:000003">
    <property type="entry name" value="ATP synthase gamma chain, chloroplastic"/>
    <property type="match status" value="1"/>
</dbReference>
<dbReference type="Gene3D" id="3.40.1380.10">
    <property type="match status" value="1"/>
</dbReference>
<dbReference type="Gene3D" id="1.10.287.80">
    <property type="entry name" value="ATP synthase, gamma subunit, helix hairpin domain"/>
    <property type="match status" value="1"/>
</dbReference>
<dbReference type="HAMAP" id="MF_00815">
    <property type="entry name" value="ATP_synth_gamma_bact"/>
    <property type="match status" value="1"/>
</dbReference>
<dbReference type="InterPro" id="IPR035968">
    <property type="entry name" value="ATP_synth_F1_ATPase_gsu"/>
</dbReference>
<dbReference type="InterPro" id="IPR000131">
    <property type="entry name" value="ATP_synth_F1_gsu"/>
</dbReference>
<dbReference type="InterPro" id="IPR023632">
    <property type="entry name" value="ATP_synth_F1_gsu_CS"/>
</dbReference>
<dbReference type="NCBIfam" id="TIGR01146">
    <property type="entry name" value="ATPsyn_F1gamma"/>
    <property type="match status" value="1"/>
</dbReference>
<dbReference type="NCBIfam" id="NF004146">
    <property type="entry name" value="PRK05621.1-4"/>
    <property type="match status" value="1"/>
</dbReference>
<dbReference type="PANTHER" id="PTHR11693">
    <property type="entry name" value="ATP SYNTHASE GAMMA CHAIN"/>
    <property type="match status" value="1"/>
</dbReference>
<dbReference type="PANTHER" id="PTHR11693:SF22">
    <property type="entry name" value="ATP SYNTHASE SUBUNIT GAMMA, MITOCHONDRIAL"/>
    <property type="match status" value="1"/>
</dbReference>
<dbReference type="Pfam" id="PF00231">
    <property type="entry name" value="ATP-synt"/>
    <property type="match status" value="1"/>
</dbReference>
<dbReference type="PIRSF" id="PIRSF039089">
    <property type="entry name" value="ATP_synthase_gamma"/>
    <property type="match status" value="1"/>
</dbReference>
<dbReference type="PRINTS" id="PR00126">
    <property type="entry name" value="ATPASEGAMMA"/>
</dbReference>
<dbReference type="SUPFAM" id="SSF52943">
    <property type="entry name" value="ATP synthase (F1-ATPase), gamma subunit"/>
    <property type="match status" value="1"/>
</dbReference>
<dbReference type="PROSITE" id="PS00153">
    <property type="entry name" value="ATPASE_GAMMA"/>
    <property type="match status" value="1"/>
</dbReference>
<reference key="1">
    <citation type="submission" date="2008-02" db="EMBL/GenBank/DDBJ databases">
        <title>Complete sequence of chromosome of Methylobacterium sp. 4-46.</title>
        <authorList>
            <consortium name="US DOE Joint Genome Institute"/>
            <person name="Copeland A."/>
            <person name="Lucas S."/>
            <person name="Lapidus A."/>
            <person name="Glavina del Rio T."/>
            <person name="Dalin E."/>
            <person name="Tice H."/>
            <person name="Bruce D."/>
            <person name="Goodwin L."/>
            <person name="Pitluck S."/>
            <person name="Chertkov O."/>
            <person name="Brettin T."/>
            <person name="Detter J.C."/>
            <person name="Han C."/>
            <person name="Kuske C.R."/>
            <person name="Schmutz J."/>
            <person name="Larimer F."/>
            <person name="Land M."/>
            <person name="Hauser L."/>
            <person name="Kyrpides N."/>
            <person name="Ivanova N."/>
            <person name="Marx C.J."/>
            <person name="Richardson P."/>
        </authorList>
    </citation>
    <scope>NUCLEOTIDE SEQUENCE [LARGE SCALE GENOMIC DNA]</scope>
    <source>
        <strain>4-46</strain>
    </source>
</reference>
<protein>
    <recommendedName>
        <fullName evidence="1">ATP synthase gamma chain</fullName>
    </recommendedName>
    <alternativeName>
        <fullName evidence="1">ATP synthase F1 sector gamma subunit</fullName>
    </alternativeName>
    <alternativeName>
        <fullName evidence="1">F-ATPase gamma subunit</fullName>
    </alternativeName>
</protein>
<organism>
    <name type="scientific">Methylobacterium sp. (strain 4-46)</name>
    <dbReference type="NCBI Taxonomy" id="426117"/>
    <lineage>
        <taxon>Bacteria</taxon>
        <taxon>Pseudomonadati</taxon>
        <taxon>Pseudomonadota</taxon>
        <taxon>Alphaproteobacteria</taxon>
        <taxon>Hyphomicrobiales</taxon>
        <taxon>Methylobacteriaceae</taxon>
        <taxon>Methylobacterium</taxon>
    </lineage>
</organism>
<sequence>MPSLKDLRNRIASVKATQKITKAMQMVAAAKLRRAQNAAENARPYAERMAAVLGNLATNLTPGAETPRLLSGTGADRVHLLLVCTAERGLCGAFNSSIARLARDHARRLTAEGRTVKIICVGKKGYDILRREFRDQIVELIELRGVRQLGFDNAETIAQNLLGRFEAGEFDIATLFYSRFRSVIVQIPTAQQIIPAEIPPAGEAAQTDAAYEYEPDEGEILAALLPKNLTVQILRALLENAASEQGARMSAMDNATRNAGEMIKKQTLVYNRTRQAQITKELIEIISGAEAL</sequence>